<dbReference type="EMBL" id="CP001396">
    <property type="protein sequence ID" value="ACR63009.1"/>
    <property type="molecule type" value="Genomic_DNA"/>
</dbReference>
<dbReference type="RefSeq" id="WP_000853883.1">
    <property type="nucleotide sequence ID" value="NC_012759.1"/>
</dbReference>
<dbReference type="SMR" id="C4ZSH9"/>
<dbReference type="KEGG" id="ebw:BWG_1881"/>
<dbReference type="HOGENOM" id="CLU_053334_0_0_6"/>
<dbReference type="UniPathway" id="UPA00704">
    <property type="reaction ID" value="UER00716"/>
</dbReference>
<dbReference type="GO" id="GO:0005886">
    <property type="term" value="C:plasma membrane"/>
    <property type="evidence" value="ECO:0007669"/>
    <property type="project" value="TreeGrafter"/>
</dbReference>
<dbReference type="GO" id="GO:2001059">
    <property type="term" value="P:D-tagatose 6-phosphate catabolic process"/>
    <property type="evidence" value="ECO:0007669"/>
    <property type="project" value="UniProtKB-UniRule"/>
</dbReference>
<dbReference type="GO" id="GO:0019402">
    <property type="term" value="P:galactitol metabolic process"/>
    <property type="evidence" value="ECO:0007669"/>
    <property type="project" value="UniProtKB-KW"/>
</dbReference>
<dbReference type="GO" id="GO:0009401">
    <property type="term" value="P:phosphoenolpyruvate-dependent sugar phosphotransferase system"/>
    <property type="evidence" value="ECO:0007669"/>
    <property type="project" value="TreeGrafter"/>
</dbReference>
<dbReference type="FunFam" id="3.20.20.70:FF:000141">
    <property type="entry name" value="D-tagatose-1,6-bisphosphate aldolase subunit GatZ"/>
    <property type="match status" value="1"/>
</dbReference>
<dbReference type="Gene3D" id="3.20.20.70">
    <property type="entry name" value="Aldolase class I"/>
    <property type="match status" value="1"/>
</dbReference>
<dbReference type="Gene3D" id="1.10.400.20">
    <property type="entry name" value="putative tagatose 6-phosphate kinase domain like"/>
    <property type="match status" value="1"/>
</dbReference>
<dbReference type="HAMAP" id="MF_01296">
    <property type="entry name" value="Tagatose_aldol_GatZ"/>
    <property type="match status" value="1"/>
</dbReference>
<dbReference type="InterPro" id="IPR013785">
    <property type="entry name" value="Aldolase_TIM"/>
</dbReference>
<dbReference type="InterPro" id="IPR012062">
    <property type="entry name" value="GatZ/KbaZ-like"/>
</dbReference>
<dbReference type="InterPro" id="IPR050303">
    <property type="entry name" value="GatZ_KbaZ_carbometab"/>
</dbReference>
<dbReference type="InterPro" id="IPR023436">
    <property type="entry name" value="TagBP_ald_GatZ"/>
</dbReference>
<dbReference type="NCBIfam" id="TIGR02810">
    <property type="entry name" value="agaZ_gatZ"/>
    <property type="match status" value="1"/>
</dbReference>
<dbReference type="NCBIfam" id="NF011626">
    <property type="entry name" value="PRK15052.1"/>
    <property type="match status" value="1"/>
</dbReference>
<dbReference type="PANTHER" id="PTHR32502:SF12">
    <property type="entry name" value="D-TAGATOSE-1,6-BISPHOSPHATE ALDOLASE SUBUNIT GATZ"/>
    <property type="match status" value="1"/>
</dbReference>
<dbReference type="PANTHER" id="PTHR32502">
    <property type="entry name" value="N-ACETYLGALACTOSAMINE PERMEASE II COMPONENT-RELATED"/>
    <property type="match status" value="1"/>
</dbReference>
<dbReference type="Pfam" id="PF08013">
    <property type="entry name" value="GatZ_KbaZ-like"/>
    <property type="match status" value="1"/>
</dbReference>
<dbReference type="PIRSF" id="PIRSF009264">
    <property type="entry name" value="TagBP_ald_AgaZ"/>
    <property type="match status" value="1"/>
</dbReference>
<dbReference type="SUPFAM" id="SSF51569">
    <property type="entry name" value="Aldolase"/>
    <property type="match status" value="1"/>
</dbReference>
<gene>
    <name evidence="1" type="primary">gatZ</name>
    <name type="ordered locus">BWG_1881</name>
</gene>
<name>GATZ_ECOBW</name>
<keyword id="KW-0298">Galactitol metabolism</keyword>
<feature type="chain" id="PRO_1000214222" description="D-tagatose-1,6-bisphosphate aldolase subunit GatZ">
    <location>
        <begin position="1"/>
        <end position="420"/>
    </location>
</feature>
<protein>
    <recommendedName>
        <fullName evidence="1">D-tagatose-1,6-bisphosphate aldolase subunit GatZ</fullName>
    </recommendedName>
</protein>
<organism>
    <name type="scientific">Escherichia coli (strain K12 / MC4100 / BW2952)</name>
    <dbReference type="NCBI Taxonomy" id="595496"/>
    <lineage>
        <taxon>Bacteria</taxon>
        <taxon>Pseudomonadati</taxon>
        <taxon>Pseudomonadota</taxon>
        <taxon>Gammaproteobacteria</taxon>
        <taxon>Enterobacterales</taxon>
        <taxon>Enterobacteriaceae</taxon>
        <taxon>Escherichia</taxon>
    </lineage>
</organism>
<sequence>MKTLIARHKAGEHIGICSVCSAHPLVIEAALAFDRNSTRKVLIEATSNQVNQFGGYTGMTPADFREFVFTIADKVGFARERIILGGDHLGPNCWQQENADAAMEKSVELVKEYVRAGFSKIHLDASMSCAGDPIPLAPETVAERAAVLCFAAESVATDCQREQLSYVIGTEVPVPGGEASAIQSVHITHVEDAANTLRTHQKAFIARGLTEALTRVIAIVVQPGVEFDHSNIIHYQPQEAQPLAQWIENTRMVYEAHSTDYQTRTAYWELVRDHFAILKVGPALTFALREAIFALAQIEQELIAPENRSGCLAVIEEVMLDEPQYWKKYYRTGFNDSLLDIRYSLSDRIRYYWPHSRIKNSVETMMVNLEGVDIPLGMISQYLPKQFERIQSGELSAIPHQLIMDKIYDVLRAYRYGCAE</sequence>
<evidence type="ECO:0000255" key="1">
    <source>
        <dbReference type="HAMAP-Rule" id="MF_01296"/>
    </source>
</evidence>
<comment type="function">
    <text evidence="1">Component of the tagatose-1,6-bisphosphate aldolase GatYZ that is required for full activity and stability of the Y subunit. Could have a chaperone-like function for the proper and stable folding of GatY. When expressed alone, GatZ does not show any aldolase activity. Is involved in the catabolism of galactitol.</text>
</comment>
<comment type="pathway">
    <text evidence="1">Carbohydrate metabolism; D-tagatose 6-phosphate degradation; D-glyceraldehyde 3-phosphate and glycerone phosphate from D-tagatose 6-phosphate: step 2/2.</text>
</comment>
<comment type="subunit">
    <text evidence="1">Forms a complex with GatY.</text>
</comment>
<comment type="similarity">
    <text evidence="1">Belongs to the GatZ/KbaZ family. GatZ subfamily.</text>
</comment>
<accession>C4ZSH9</accession>
<reference key="1">
    <citation type="journal article" date="2009" name="J. Bacteriol.">
        <title>Genomic sequencing reveals regulatory mutations and recombinational events in the widely used MC4100 lineage of Escherichia coli K-12.</title>
        <authorList>
            <person name="Ferenci T."/>
            <person name="Zhou Z."/>
            <person name="Betteridge T."/>
            <person name="Ren Y."/>
            <person name="Liu Y."/>
            <person name="Feng L."/>
            <person name="Reeves P.R."/>
            <person name="Wang L."/>
        </authorList>
    </citation>
    <scope>NUCLEOTIDE SEQUENCE [LARGE SCALE GENOMIC DNA]</scope>
    <source>
        <strain>K12 / MC4100 / BW2952</strain>
    </source>
</reference>
<proteinExistence type="inferred from homology"/>